<organism>
    <name type="scientific">Bos taurus</name>
    <name type="common">Bovine</name>
    <dbReference type="NCBI Taxonomy" id="9913"/>
    <lineage>
        <taxon>Eukaryota</taxon>
        <taxon>Metazoa</taxon>
        <taxon>Chordata</taxon>
        <taxon>Craniata</taxon>
        <taxon>Vertebrata</taxon>
        <taxon>Euteleostomi</taxon>
        <taxon>Mammalia</taxon>
        <taxon>Eutheria</taxon>
        <taxon>Laurasiatheria</taxon>
        <taxon>Artiodactyla</taxon>
        <taxon>Ruminantia</taxon>
        <taxon>Pecora</taxon>
        <taxon>Bovidae</taxon>
        <taxon>Bovinae</taxon>
        <taxon>Bos</taxon>
    </lineage>
</organism>
<sequence length="432" mass="48902">MSELKDCPLQFHDFKSVDHLKVCPRYTAVLARSEDDGIGIEELDTLQLELETLLSSASRRLRVLEAETQILTDWQDKKGDRRFLKLGRDHELGAPPKHGKPKKQKLEGKAGHGPGPGPGRPKSKNLQPKIQEYEFTDDPIDVPRIPKNDAPNRFWASVEPYCADITSEEVRTLEELLKPPEDEAEHYKIPPLGKHYSQRWAQEDLLEEQKDGARAAAVADKKKGLMGPLTELDTKDVDALLKKSEAQHEQPEDGCPFGALTQRLLQALVEENIISPMEDSPIPDMSGKESGADGASTSPRNQNKPFSVPHTKSLESRIKEELIAQGLLESEDRPAEDSEDEVLAELRKRQAELKALSAHNRTKKHDLLRLAKEEVSRQELRQRVRMADNEVMDAFRKIMAARQKKRTPTKKEKDQAWKTLKERESILKLLDG</sequence>
<dbReference type="EMBL" id="BT020627">
    <property type="protein sequence ID" value="AAX08644.1"/>
    <property type="molecule type" value="mRNA"/>
</dbReference>
<dbReference type="RefSeq" id="NP_001019682.1">
    <property type="nucleotide sequence ID" value="NM_001024511.1"/>
</dbReference>
<dbReference type="RefSeq" id="XP_010815728.1">
    <property type="nucleotide sequence ID" value="XM_010817426.2"/>
</dbReference>
<dbReference type="RefSeq" id="XP_010815729.1">
    <property type="nucleotide sequence ID" value="XM_010817427.2"/>
</dbReference>
<dbReference type="RefSeq" id="XP_010815730.1">
    <property type="nucleotide sequence ID" value="XM_010817428.1"/>
</dbReference>
<dbReference type="RefSeq" id="XP_059735568.1">
    <property type="nucleotide sequence ID" value="XM_059879585.1"/>
</dbReference>
<dbReference type="RefSeq" id="XP_059735569.1">
    <property type="nucleotide sequence ID" value="XM_059879586.1"/>
</dbReference>
<dbReference type="RefSeq" id="XP_059735570.1">
    <property type="nucleotide sequence ID" value="XM_059879587.1"/>
</dbReference>
<dbReference type="RefSeq" id="XP_059735571.1">
    <property type="nucleotide sequence ID" value="XM_059879588.1"/>
</dbReference>
<dbReference type="RefSeq" id="XP_059735572.1">
    <property type="nucleotide sequence ID" value="XM_059879589.1"/>
</dbReference>
<dbReference type="SMR" id="Q5EAE2"/>
<dbReference type="FunCoup" id="Q5EAE2">
    <property type="interactions" value="5177"/>
</dbReference>
<dbReference type="STRING" id="9913.ENSBTAP00000044929"/>
<dbReference type="PaxDb" id="9913-ENSBTAP00000044929"/>
<dbReference type="Ensembl" id="ENSBTAT00000047754.5">
    <property type="protein sequence ID" value="ENSBTAP00000044929.3"/>
    <property type="gene ID" value="ENSBTAG00000007961.7"/>
</dbReference>
<dbReference type="GeneID" id="510184"/>
<dbReference type="KEGG" id="bta:510184"/>
<dbReference type="CTD" id="10474"/>
<dbReference type="VEuPathDB" id="HostDB:ENSBTAG00000007961"/>
<dbReference type="VGNC" id="VGNC:35566">
    <property type="gene designation" value="TADA3"/>
</dbReference>
<dbReference type="eggNOG" id="KOG4191">
    <property type="taxonomic scope" value="Eukaryota"/>
</dbReference>
<dbReference type="GeneTree" id="ENSGT00390000008947"/>
<dbReference type="HOGENOM" id="CLU_038515_0_0_1"/>
<dbReference type="InParanoid" id="Q5EAE2"/>
<dbReference type="OMA" id="TPNKFWA"/>
<dbReference type="OrthoDB" id="1232at2759"/>
<dbReference type="TreeFam" id="TF323397"/>
<dbReference type="Reactome" id="R-BTA-5689880">
    <property type="pathway name" value="Ub-specific processing proteases"/>
</dbReference>
<dbReference type="Reactome" id="R-BTA-9772755">
    <property type="pathway name" value="Formation of WDR5-containing histone-modifying complexes"/>
</dbReference>
<dbReference type="Proteomes" id="UP000009136">
    <property type="component" value="Chromosome 22"/>
</dbReference>
<dbReference type="Bgee" id="ENSBTAG00000007961">
    <property type="expression patterns" value="Expressed in myometrium and 108 other cell types or tissues"/>
</dbReference>
<dbReference type="GO" id="GO:0140672">
    <property type="term" value="C:ATAC complex"/>
    <property type="evidence" value="ECO:0007669"/>
    <property type="project" value="Ensembl"/>
</dbReference>
<dbReference type="GO" id="GO:0072686">
    <property type="term" value="C:mitotic spindle"/>
    <property type="evidence" value="ECO:0007669"/>
    <property type="project" value="Ensembl"/>
</dbReference>
<dbReference type="GO" id="GO:0000124">
    <property type="term" value="C:SAGA complex"/>
    <property type="evidence" value="ECO:0000318"/>
    <property type="project" value="GO_Central"/>
</dbReference>
<dbReference type="GO" id="GO:0033276">
    <property type="term" value="C:transcription factor TFTC complex"/>
    <property type="evidence" value="ECO:0007669"/>
    <property type="project" value="Ensembl"/>
</dbReference>
<dbReference type="GO" id="GO:0016922">
    <property type="term" value="F:nuclear receptor binding"/>
    <property type="evidence" value="ECO:0007669"/>
    <property type="project" value="Ensembl"/>
</dbReference>
<dbReference type="GO" id="GO:0019904">
    <property type="term" value="F:protein domain specific binding"/>
    <property type="evidence" value="ECO:0007669"/>
    <property type="project" value="Ensembl"/>
</dbReference>
<dbReference type="GO" id="GO:0003713">
    <property type="term" value="F:transcription coactivator activity"/>
    <property type="evidence" value="ECO:0000318"/>
    <property type="project" value="GO_Central"/>
</dbReference>
<dbReference type="GO" id="GO:0006325">
    <property type="term" value="P:chromatin organization"/>
    <property type="evidence" value="ECO:0007669"/>
    <property type="project" value="Ensembl"/>
</dbReference>
<dbReference type="GO" id="GO:0000278">
    <property type="term" value="P:mitotic cell cycle"/>
    <property type="evidence" value="ECO:0007669"/>
    <property type="project" value="Ensembl"/>
</dbReference>
<dbReference type="GO" id="GO:0000122">
    <property type="term" value="P:negative regulation of transcription by RNA polymerase II"/>
    <property type="evidence" value="ECO:0007669"/>
    <property type="project" value="Ensembl"/>
</dbReference>
<dbReference type="GO" id="GO:0010628">
    <property type="term" value="P:positive regulation of gene expression"/>
    <property type="evidence" value="ECO:0007669"/>
    <property type="project" value="Ensembl"/>
</dbReference>
<dbReference type="GO" id="GO:0051726">
    <property type="term" value="P:regulation of cell cycle"/>
    <property type="evidence" value="ECO:0007669"/>
    <property type="project" value="Ensembl"/>
</dbReference>
<dbReference type="GO" id="GO:0051302">
    <property type="term" value="P:regulation of cell division"/>
    <property type="evidence" value="ECO:0007669"/>
    <property type="project" value="Ensembl"/>
</dbReference>
<dbReference type="GO" id="GO:0045995">
    <property type="term" value="P:regulation of embryonic development"/>
    <property type="evidence" value="ECO:0007669"/>
    <property type="project" value="Ensembl"/>
</dbReference>
<dbReference type="GO" id="GO:0031647">
    <property type="term" value="P:regulation of protein stability"/>
    <property type="evidence" value="ECO:0007669"/>
    <property type="project" value="Ensembl"/>
</dbReference>
<dbReference type="GO" id="GO:0006357">
    <property type="term" value="P:regulation of transcription by RNA polymerase II"/>
    <property type="evidence" value="ECO:0000318"/>
    <property type="project" value="GO_Central"/>
</dbReference>
<dbReference type="InterPro" id="IPR019340">
    <property type="entry name" value="Histone_AcTrfase_su3"/>
</dbReference>
<dbReference type="PANTHER" id="PTHR13556:SF2">
    <property type="entry name" value="TRANSCRIPTIONAL ADAPTER 3"/>
    <property type="match status" value="1"/>
</dbReference>
<dbReference type="PANTHER" id="PTHR13556">
    <property type="entry name" value="TRANSCRIPTIONAL ADAPTER 3-RELATED"/>
    <property type="match status" value="1"/>
</dbReference>
<dbReference type="Pfam" id="PF10198">
    <property type="entry name" value="Ada3"/>
    <property type="match status" value="1"/>
</dbReference>
<protein>
    <recommendedName>
        <fullName>Transcriptional adapter 3</fullName>
    </recommendedName>
    <alternativeName>
        <fullName>ADA3 homolog</fullName>
    </alternativeName>
    <alternativeName>
        <fullName>Transcriptional adapter 3-like</fullName>
        <shortName>ADA3-like protein</shortName>
    </alternativeName>
</protein>
<accession>Q5EAE2</accession>
<reference key="1">
    <citation type="journal article" date="2005" name="BMC Genomics">
        <title>Characterization of 954 bovine full-CDS cDNA sequences.</title>
        <authorList>
            <person name="Harhay G.P."/>
            <person name="Sonstegard T.S."/>
            <person name="Keele J.W."/>
            <person name="Heaton M.P."/>
            <person name="Clawson M.L."/>
            <person name="Snelling W.M."/>
            <person name="Wiedmann R.T."/>
            <person name="Van Tassell C.P."/>
            <person name="Smith T.P.L."/>
        </authorList>
    </citation>
    <scope>NUCLEOTIDE SEQUENCE [LARGE SCALE MRNA]</scope>
</reference>
<name>TADA3_BOVIN</name>
<evidence type="ECO:0000250" key="1"/>
<evidence type="ECO:0000250" key="2">
    <source>
        <dbReference type="UniProtKB" id="O75528"/>
    </source>
</evidence>
<evidence type="ECO:0000255" key="3"/>
<evidence type="ECO:0000256" key="4">
    <source>
        <dbReference type="SAM" id="MobiDB-lite"/>
    </source>
</evidence>
<evidence type="ECO:0000305" key="5"/>
<proteinExistence type="evidence at transcript level"/>
<gene>
    <name type="primary">TADA3</name>
    <name type="synonym">ADA3</name>
    <name type="synonym">TADA3L</name>
</gene>
<comment type="function">
    <text evidence="1">Functions as a component of the PCAF complex. The PCAF complex is capable of efficiently acetylating histones in a nucleosomal context. The PCAF complex could be considered as the human version of the yeast SAGA complex. Also known as a coactivator for p53/TP53-dependent transcriptional activation (By similarity). Component of the ATAC complex, a complex with histone acetyltransferase activity on histones H3 and H4 (By similarity).</text>
</comment>
<comment type="subunit">
    <text evidence="1">The PCAF complex is composed of a number of TBP-associated factors (TAFS), such as TAF5, TAF5L, TAF6, TAF6L, TAF9, TAF10 and TAF12, PCAF, and also PCAF-associated factors (PAFs), such as TADA2L/ADA2, TADA3L/ADA3 and SPT3. Interacts directly with TADA2L and PCAF and also with the high-risk HPV oncoprotein E6. Component of the STAGA transcription coactivator-HAT complex, at least composed of SUPT3H, GCN5L2, TAF5L, TAF6L, SUPT7L, TADA3L, TAD1L, TAF10, TAF12, TRRAP and TAF9. Component of the TFTC-HAT complex (By similarity). Component of the ADA2A-containing complex (ATAC), composed of KAT14, KAT2A, TADA2L, TADA3L, ZZ3, MBIP, WDR5, YEATS2, CCDC101 and DR1 (By similarity).</text>
</comment>
<comment type="subcellular location">
    <subcellularLocation>
        <location evidence="1">Nucleus</location>
    </subcellularLocation>
</comment>
<comment type="similarity">
    <text evidence="5">Belongs to the NGG1 family.</text>
</comment>
<keyword id="KW-0007">Acetylation</keyword>
<keyword id="KW-0175">Coiled coil</keyword>
<keyword id="KW-1017">Isopeptide bond</keyword>
<keyword id="KW-0539">Nucleus</keyword>
<keyword id="KW-0597">Phosphoprotein</keyword>
<keyword id="KW-1185">Reference proteome</keyword>
<keyword id="KW-0804">Transcription</keyword>
<keyword id="KW-0805">Transcription regulation</keyword>
<keyword id="KW-0832">Ubl conjugation</keyword>
<feature type="chain" id="PRO_0000357451" description="Transcriptional adapter 3">
    <location>
        <begin position="1"/>
        <end position="432"/>
    </location>
</feature>
<feature type="region of interest" description="Disordered" evidence="4">
    <location>
        <begin position="87"/>
        <end position="126"/>
    </location>
</feature>
<feature type="region of interest" description="Disordered" evidence="4">
    <location>
        <begin position="272"/>
        <end position="319"/>
    </location>
</feature>
<feature type="coiled-coil region" evidence="3">
    <location>
        <begin position="40"/>
        <end position="69"/>
    </location>
</feature>
<feature type="coiled-coil region" evidence="3">
    <location>
        <begin position="367"/>
        <end position="407"/>
    </location>
</feature>
<feature type="compositionally biased region" description="Polar residues" evidence="4">
    <location>
        <begin position="295"/>
        <end position="305"/>
    </location>
</feature>
<feature type="modified residue" description="Phosphoserine" evidence="2">
    <location>
        <position position="280"/>
    </location>
</feature>
<feature type="modified residue" description="Phosphoserine" evidence="2">
    <location>
        <position position="298"/>
    </location>
</feature>
<feature type="modified residue" description="N6-acetyllysine" evidence="2">
    <location>
        <position position="418"/>
    </location>
</feature>
<feature type="cross-link" description="Glycyl lysine isopeptide (Lys-Gly) (interchain with G-Cter in SUMO2)" evidence="2">
    <location>
        <position position="21"/>
    </location>
</feature>
<feature type="cross-link" description="Glycyl lysine isopeptide (Lys-Gly) (interchain with G-Cter in SUMO2)" evidence="2">
    <location>
        <position position="129"/>
    </location>
</feature>